<proteinExistence type="inferred from homology"/>
<reference key="1">
    <citation type="journal article" date="2011" name="J. Bacteriol.">
        <title>Comparative genomics of 28 Salmonella enterica isolates: evidence for CRISPR-mediated adaptive sublineage evolution.</title>
        <authorList>
            <person name="Fricke W.F."/>
            <person name="Mammel M.K."/>
            <person name="McDermott P.F."/>
            <person name="Tartera C."/>
            <person name="White D.G."/>
            <person name="Leclerc J.E."/>
            <person name="Ravel J."/>
            <person name="Cebula T.A."/>
        </authorList>
    </citation>
    <scope>NUCLEOTIDE SEQUENCE [LARGE SCALE GENOMIC DNA]</scope>
    <source>
        <strain>SL254</strain>
    </source>
</reference>
<feature type="chain" id="PRO_1000200830" description="Multidrug resistance protein MdtL">
    <location>
        <begin position="1"/>
        <end position="395"/>
    </location>
</feature>
<feature type="transmembrane region" description="Helical" evidence="1">
    <location>
        <begin position="4"/>
        <end position="24"/>
    </location>
</feature>
<feature type="transmembrane region" description="Helical" evidence="1">
    <location>
        <begin position="42"/>
        <end position="62"/>
    </location>
</feature>
<feature type="transmembrane region" description="Helical" evidence="1">
    <location>
        <begin position="69"/>
        <end position="89"/>
    </location>
</feature>
<feature type="transmembrane region" description="Helical" evidence="1">
    <location>
        <begin position="93"/>
        <end position="113"/>
    </location>
</feature>
<feature type="transmembrane region" description="Helical" evidence="1">
    <location>
        <begin position="131"/>
        <end position="151"/>
    </location>
</feature>
<feature type="transmembrane region" description="Helical" evidence="1">
    <location>
        <begin position="158"/>
        <end position="178"/>
    </location>
</feature>
<feature type="transmembrane region" description="Helical" evidence="1">
    <location>
        <begin position="217"/>
        <end position="237"/>
    </location>
</feature>
<feature type="transmembrane region" description="Helical" evidence="1">
    <location>
        <begin position="247"/>
        <end position="267"/>
    </location>
</feature>
<feature type="transmembrane region" description="Helical" evidence="1">
    <location>
        <begin position="271"/>
        <end position="291"/>
    </location>
</feature>
<feature type="transmembrane region" description="Helical" evidence="1">
    <location>
        <begin position="295"/>
        <end position="315"/>
    </location>
</feature>
<feature type="transmembrane region" description="Helical" evidence="1">
    <location>
        <begin position="328"/>
        <end position="350"/>
    </location>
</feature>
<feature type="transmembrane region" description="Helical" evidence="1">
    <location>
        <begin position="355"/>
        <end position="377"/>
    </location>
</feature>
<sequence length="395" mass="41985">MKRFLLCSFALVLLYPAGIDMYLVGLPRIAADLNASEAQLHIAFSVYLAGMATAMLFAGKIADQSGRKPVAIVGALVFMMASLLCSRASEGSLFLSGRFLQGVGAGGCYVVAFAILRDTLDEHRRAKVLSLLNGITCIVPVLAPVVGHLIMLRFPWQSLFYTMSAMGIIVGLLSLFILRETRPARLAPRDLSRSSPAAESLVNRFFVSRLAITTLSVSVILTFVNASPVLLMEVMGFSRGDYAITMALTAGVSMVVSFSTPFALGLFKPRTLMLVSQGLFLTAGVTLSLAHTNTVTLFGLTLICAGFSVGFGVAMSQALGPFSLRAGVASSTLGIAQVCGSSLWIWLAAILGISAMNMLIGILIGCSIVSILLIFSVTPNRSVAEHEEIPYQSRP</sequence>
<gene>
    <name evidence="1" type="primary">mdtL</name>
    <name type="ordered locus">SNSL254_A4128</name>
</gene>
<accession>B4SYB3</accession>
<evidence type="ECO:0000255" key="1">
    <source>
        <dbReference type="HAMAP-Rule" id="MF_01530"/>
    </source>
</evidence>
<organism>
    <name type="scientific">Salmonella newport (strain SL254)</name>
    <dbReference type="NCBI Taxonomy" id="423368"/>
    <lineage>
        <taxon>Bacteria</taxon>
        <taxon>Pseudomonadati</taxon>
        <taxon>Pseudomonadota</taxon>
        <taxon>Gammaproteobacteria</taxon>
        <taxon>Enterobacterales</taxon>
        <taxon>Enterobacteriaceae</taxon>
        <taxon>Salmonella</taxon>
    </lineage>
</organism>
<dbReference type="EMBL" id="CP001113">
    <property type="protein sequence ID" value="ACF64479.1"/>
    <property type="molecule type" value="Genomic_DNA"/>
</dbReference>
<dbReference type="RefSeq" id="WP_000819615.1">
    <property type="nucleotide sequence ID" value="NZ_CCMR01000001.1"/>
</dbReference>
<dbReference type="SMR" id="B4SYB3"/>
<dbReference type="KEGG" id="see:SNSL254_A4128"/>
<dbReference type="HOGENOM" id="CLU_001265_47_1_6"/>
<dbReference type="Proteomes" id="UP000008824">
    <property type="component" value="Chromosome"/>
</dbReference>
<dbReference type="GO" id="GO:0005886">
    <property type="term" value="C:plasma membrane"/>
    <property type="evidence" value="ECO:0007669"/>
    <property type="project" value="UniProtKB-SubCell"/>
</dbReference>
<dbReference type="GO" id="GO:0022857">
    <property type="term" value="F:transmembrane transporter activity"/>
    <property type="evidence" value="ECO:0007669"/>
    <property type="project" value="UniProtKB-UniRule"/>
</dbReference>
<dbReference type="CDD" id="cd17320">
    <property type="entry name" value="MFS_MdfA_MDR_like"/>
    <property type="match status" value="1"/>
</dbReference>
<dbReference type="FunFam" id="1.20.1720.10:FF:000003">
    <property type="entry name" value="Multidrug resistance protein MdtL"/>
    <property type="match status" value="1"/>
</dbReference>
<dbReference type="Gene3D" id="1.20.1720.10">
    <property type="entry name" value="Multidrug resistance protein D"/>
    <property type="match status" value="1"/>
</dbReference>
<dbReference type="HAMAP" id="MF_01530">
    <property type="entry name" value="MFS_MdtL"/>
    <property type="match status" value="1"/>
</dbReference>
<dbReference type="InterPro" id="IPR011701">
    <property type="entry name" value="MFS"/>
</dbReference>
<dbReference type="InterPro" id="IPR020846">
    <property type="entry name" value="MFS_dom"/>
</dbReference>
<dbReference type="InterPro" id="IPR036259">
    <property type="entry name" value="MFS_trans_sf"/>
</dbReference>
<dbReference type="InterPro" id="IPR023697">
    <property type="entry name" value="Multidrug-R_MdtL"/>
</dbReference>
<dbReference type="NCBIfam" id="NF007782">
    <property type="entry name" value="PRK10473.1"/>
    <property type="match status" value="1"/>
</dbReference>
<dbReference type="PANTHER" id="PTHR42718">
    <property type="entry name" value="MAJOR FACILITATOR SUPERFAMILY MULTIDRUG TRANSPORTER MFSC"/>
    <property type="match status" value="1"/>
</dbReference>
<dbReference type="PANTHER" id="PTHR42718:SF9">
    <property type="entry name" value="MAJOR FACILITATOR SUPERFAMILY MULTIDRUG TRANSPORTER MFSC"/>
    <property type="match status" value="1"/>
</dbReference>
<dbReference type="Pfam" id="PF07690">
    <property type="entry name" value="MFS_1"/>
    <property type="match status" value="1"/>
</dbReference>
<dbReference type="SUPFAM" id="SSF103473">
    <property type="entry name" value="MFS general substrate transporter"/>
    <property type="match status" value="1"/>
</dbReference>
<dbReference type="PROSITE" id="PS50850">
    <property type="entry name" value="MFS"/>
    <property type="match status" value="1"/>
</dbReference>
<name>MDTL_SALNS</name>
<protein>
    <recommendedName>
        <fullName evidence="1">Multidrug resistance protein MdtL</fullName>
    </recommendedName>
</protein>
<comment type="subcellular location">
    <subcellularLocation>
        <location evidence="1">Cell inner membrane</location>
        <topology evidence="1">Multi-pass membrane protein</topology>
    </subcellularLocation>
</comment>
<comment type="similarity">
    <text evidence="1">Belongs to the major facilitator superfamily. DHA1 family. MdtL (TC 2.A.1.2.22) subfamily.</text>
</comment>
<keyword id="KW-0997">Cell inner membrane</keyword>
<keyword id="KW-1003">Cell membrane</keyword>
<keyword id="KW-0472">Membrane</keyword>
<keyword id="KW-0812">Transmembrane</keyword>
<keyword id="KW-1133">Transmembrane helix</keyword>
<keyword id="KW-0813">Transport</keyword>